<accession>Q2SIP2</accession>
<proteinExistence type="inferred from homology"/>
<reference key="1">
    <citation type="journal article" date="2005" name="Nucleic Acids Res.">
        <title>Genomic blueprint of Hahella chejuensis, a marine microbe producing an algicidal agent.</title>
        <authorList>
            <person name="Jeong H."/>
            <person name="Yim J.H."/>
            <person name="Lee C."/>
            <person name="Choi S.-H."/>
            <person name="Park Y.K."/>
            <person name="Yoon S.H."/>
            <person name="Hur C.-G."/>
            <person name="Kang H.-Y."/>
            <person name="Kim D."/>
            <person name="Lee H.H."/>
            <person name="Park K.H."/>
            <person name="Park S.-H."/>
            <person name="Park H.-S."/>
            <person name="Lee H.K."/>
            <person name="Oh T.K."/>
            <person name="Kim J.F."/>
        </authorList>
    </citation>
    <scope>NUCLEOTIDE SEQUENCE [LARGE SCALE GENOMIC DNA]</scope>
    <source>
        <strain>KCTC 2396</strain>
    </source>
</reference>
<evidence type="ECO:0000255" key="1">
    <source>
        <dbReference type="HAMAP-Rule" id="MF_00247"/>
    </source>
</evidence>
<gene>
    <name evidence="1" type="primary">sthA</name>
    <name type="ordered locus">HCH_02695</name>
</gene>
<protein>
    <recommendedName>
        <fullName evidence="1">Soluble pyridine nucleotide transhydrogenase</fullName>
        <shortName evidence="1">STH</shortName>
        <ecNumber evidence="1">1.6.1.1</ecNumber>
    </recommendedName>
    <alternativeName>
        <fullName evidence="1">NAD(P)(+) transhydrogenase [B-specific]</fullName>
    </alternativeName>
</protein>
<feature type="chain" id="PRO_0000260236" description="Soluble pyridine nucleotide transhydrogenase">
    <location>
        <begin position="1"/>
        <end position="464"/>
    </location>
</feature>
<feature type="binding site" evidence="1">
    <location>
        <begin position="35"/>
        <end position="44"/>
    </location>
    <ligand>
        <name>FAD</name>
        <dbReference type="ChEBI" id="CHEBI:57692"/>
    </ligand>
</feature>
<sequence>MAEYRYDVVVIGAGPAGEGAAMNAAKHGKRVAVIEDKSQVGGNCTHMGTIPSKALRHAVKQIIQFNTNTMFRDIGEPRWFSFPRVLQNAERVIGKQVKIRTQFYARNRVDLYRGRASFIDENRIEVRGGLNGKEVLYGKQIVIATGSRPYLPEDVDFTHRRIYNSDSILKLSHTPRTLIIYGAGVIGCEYASIFVGLGVKVDLINPGERLLSFLDGEISDALSYHLRDNGVLVRHNEQYDSVVGDDHGVVLTMKSGKRIRADAFLWCNGRTGNTDNLGLENIGLEPNARGQLAVDNHYRTKIPHVFAAGDVIGWPSLASAAYDQGRSASSEIVKDDFFRFITDVPTGIYTIPEISSVGRTEAELTEAKVPYEVGQAFFKDLARAQITGDTVGMLKLLFHRETMELLGIHCFGDQASEIVHIGQAIMNQPGELNTIEYFVNTTFNYPTMAEAYRVAALNGLNRIF</sequence>
<organism>
    <name type="scientific">Hahella chejuensis (strain KCTC 2396)</name>
    <dbReference type="NCBI Taxonomy" id="349521"/>
    <lineage>
        <taxon>Bacteria</taxon>
        <taxon>Pseudomonadati</taxon>
        <taxon>Pseudomonadota</taxon>
        <taxon>Gammaproteobacteria</taxon>
        <taxon>Oceanospirillales</taxon>
        <taxon>Hahellaceae</taxon>
        <taxon>Hahella</taxon>
    </lineage>
</organism>
<dbReference type="EC" id="1.6.1.1" evidence="1"/>
<dbReference type="EMBL" id="CP000155">
    <property type="protein sequence ID" value="ABC29482.1"/>
    <property type="molecule type" value="Genomic_DNA"/>
</dbReference>
<dbReference type="RefSeq" id="WP_011396551.1">
    <property type="nucleotide sequence ID" value="NC_007645.1"/>
</dbReference>
<dbReference type="SMR" id="Q2SIP2"/>
<dbReference type="STRING" id="349521.HCH_02695"/>
<dbReference type="KEGG" id="hch:HCH_02695"/>
<dbReference type="eggNOG" id="COG1249">
    <property type="taxonomic scope" value="Bacteria"/>
</dbReference>
<dbReference type="HOGENOM" id="CLU_016755_0_0_6"/>
<dbReference type="OrthoDB" id="9800167at2"/>
<dbReference type="Proteomes" id="UP000000238">
    <property type="component" value="Chromosome"/>
</dbReference>
<dbReference type="GO" id="GO:0005829">
    <property type="term" value="C:cytosol"/>
    <property type="evidence" value="ECO:0007669"/>
    <property type="project" value="TreeGrafter"/>
</dbReference>
<dbReference type="GO" id="GO:0004148">
    <property type="term" value="F:dihydrolipoyl dehydrogenase (NADH) activity"/>
    <property type="evidence" value="ECO:0007669"/>
    <property type="project" value="TreeGrafter"/>
</dbReference>
<dbReference type="GO" id="GO:0050660">
    <property type="term" value="F:flavin adenine dinucleotide binding"/>
    <property type="evidence" value="ECO:0007669"/>
    <property type="project" value="TreeGrafter"/>
</dbReference>
<dbReference type="GO" id="GO:0003957">
    <property type="term" value="F:NAD(P)+ transhydrogenase (Si-specific) activity"/>
    <property type="evidence" value="ECO:0007669"/>
    <property type="project" value="UniProtKB-UniRule"/>
</dbReference>
<dbReference type="GO" id="GO:0006103">
    <property type="term" value="P:2-oxoglutarate metabolic process"/>
    <property type="evidence" value="ECO:0007669"/>
    <property type="project" value="TreeGrafter"/>
</dbReference>
<dbReference type="GO" id="GO:0006739">
    <property type="term" value="P:NADP metabolic process"/>
    <property type="evidence" value="ECO:0007669"/>
    <property type="project" value="UniProtKB-UniRule"/>
</dbReference>
<dbReference type="FunFam" id="3.30.390.30:FF:000002">
    <property type="entry name" value="Soluble pyridine nucleotide transhydrogenase"/>
    <property type="match status" value="1"/>
</dbReference>
<dbReference type="FunFam" id="3.50.50.60:FF:000008">
    <property type="entry name" value="Soluble pyridine nucleotide transhydrogenase"/>
    <property type="match status" value="1"/>
</dbReference>
<dbReference type="Gene3D" id="3.30.390.30">
    <property type="match status" value="1"/>
</dbReference>
<dbReference type="Gene3D" id="3.50.50.60">
    <property type="entry name" value="FAD/NAD(P)-binding domain"/>
    <property type="match status" value="2"/>
</dbReference>
<dbReference type="HAMAP" id="MF_00247">
    <property type="entry name" value="SthA"/>
    <property type="match status" value="1"/>
</dbReference>
<dbReference type="InterPro" id="IPR050151">
    <property type="entry name" value="Class-I_Pyr_Nuc-Dis_Oxidored"/>
</dbReference>
<dbReference type="InterPro" id="IPR036188">
    <property type="entry name" value="FAD/NAD-bd_sf"/>
</dbReference>
<dbReference type="InterPro" id="IPR023753">
    <property type="entry name" value="FAD/NAD-binding_dom"/>
</dbReference>
<dbReference type="InterPro" id="IPR016156">
    <property type="entry name" value="FAD/NAD-linked_Rdtase_dimer_sf"/>
</dbReference>
<dbReference type="InterPro" id="IPR001100">
    <property type="entry name" value="Pyr_nuc-diS_OxRdtase"/>
</dbReference>
<dbReference type="InterPro" id="IPR004099">
    <property type="entry name" value="Pyr_nucl-diS_OxRdtase_dimer"/>
</dbReference>
<dbReference type="InterPro" id="IPR022962">
    <property type="entry name" value="STH_gammaproteobact"/>
</dbReference>
<dbReference type="NCBIfam" id="NF003585">
    <property type="entry name" value="PRK05249.1"/>
    <property type="match status" value="1"/>
</dbReference>
<dbReference type="PANTHER" id="PTHR22912">
    <property type="entry name" value="DISULFIDE OXIDOREDUCTASE"/>
    <property type="match status" value="1"/>
</dbReference>
<dbReference type="PANTHER" id="PTHR22912:SF93">
    <property type="entry name" value="SOLUBLE PYRIDINE NUCLEOTIDE TRANSHYDROGENASE"/>
    <property type="match status" value="1"/>
</dbReference>
<dbReference type="Pfam" id="PF07992">
    <property type="entry name" value="Pyr_redox_2"/>
    <property type="match status" value="1"/>
</dbReference>
<dbReference type="Pfam" id="PF02852">
    <property type="entry name" value="Pyr_redox_dim"/>
    <property type="match status" value="1"/>
</dbReference>
<dbReference type="PIRSF" id="PIRSF000350">
    <property type="entry name" value="Mercury_reductase_MerA"/>
    <property type="match status" value="1"/>
</dbReference>
<dbReference type="PRINTS" id="PR00368">
    <property type="entry name" value="FADPNR"/>
</dbReference>
<dbReference type="PRINTS" id="PR00411">
    <property type="entry name" value="PNDRDTASEI"/>
</dbReference>
<dbReference type="SUPFAM" id="SSF51905">
    <property type="entry name" value="FAD/NAD(P)-binding domain"/>
    <property type="match status" value="1"/>
</dbReference>
<dbReference type="SUPFAM" id="SSF55424">
    <property type="entry name" value="FAD/NAD-linked reductases, dimerisation (C-terminal) domain"/>
    <property type="match status" value="1"/>
</dbReference>
<name>STHA_HAHCH</name>
<keyword id="KW-0963">Cytoplasm</keyword>
<keyword id="KW-0274">FAD</keyword>
<keyword id="KW-0285">Flavoprotein</keyword>
<keyword id="KW-0520">NAD</keyword>
<keyword id="KW-0521">NADP</keyword>
<keyword id="KW-0560">Oxidoreductase</keyword>
<keyword id="KW-1185">Reference proteome</keyword>
<comment type="function">
    <text evidence="1">Conversion of NADPH, generated by peripheral catabolic pathways, to NADH, which can enter the respiratory chain for energy generation.</text>
</comment>
<comment type="catalytic activity">
    <reaction evidence="1">
        <text>NAD(+) + NADPH = NADH + NADP(+)</text>
        <dbReference type="Rhea" id="RHEA:11692"/>
        <dbReference type="ChEBI" id="CHEBI:57540"/>
        <dbReference type="ChEBI" id="CHEBI:57783"/>
        <dbReference type="ChEBI" id="CHEBI:57945"/>
        <dbReference type="ChEBI" id="CHEBI:58349"/>
        <dbReference type="EC" id="1.6.1.1"/>
    </reaction>
</comment>
<comment type="cofactor">
    <cofactor evidence="1">
        <name>FAD</name>
        <dbReference type="ChEBI" id="CHEBI:57692"/>
    </cofactor>
    <text evidence="1">Binds 1 FAD per subunit.</text>
</comment>
<comment type="subcellular location">
    <subcellularLocation>
        <location evidence="1">Cytoplasm</location>
    </subcellularLocation>
</comment>
<comment type="similarity">
    <text evidence="1">Belongs to the class-I pyridine nucleotide-disulfide oxidoreductase family.</text>
</comment>